<evidence type="ECO:0000255" key="1">
    <source>
        <dbReference type="HAMAP-Rule" id="MF_01584"/>
    </source>
</evidence>
<comment type="similarity">
    <text evidence="1">Belongs to the UPF0502 family.</text>
</comment>
<accession>B4T300</accession>
<name>YCEH_SALNS</name>
<organism>
    <name type="scientific">Salmonella newport (strain SL254)</name>
    <dbReference type="NCBI Taxonomy" id="423368"/>
    <lineage>
        <taxon>Bacteria</taxon>
        <taxon>Pseudomonadati</taxon>
        <taxon>Pseudomonadota</taxon>
        <taxon>Gammaproteobacteria</taxon>
        <taxon>Enterobacterales</taxon>
        <taxon>Enterobacteriaceae</taxon>
        <taxon>Salmonella</taxon>
    </lineage>
</organism>
<proteinExistence type="inferred from homology"/>
<dbReference type="EMBL" id="CP001113">
    <property type="protein sequence ID" value="ACF61585.1"/>
    <property type="molecule type" value="Genomic_DNA"/>
</dbReference>
<dbReference type="RefSeq" id="WP_000873048.1">
    <property type="nucleotide sequence ID" value="NZ_CCMR01000003.1"/>
</dbReference>
<dbReference type="SMR" id="B4T300"/>
<dbReference type="KEGG" id="see:SNSL254_A1265"/>
<dbReference type="HOGENOM" id="CLU_057831_2_0_6"/>
<dbReference type="Proteomes" id="UP000008824">
    <property type="component" value="Chromosome"/>
</dbReference>
<dbReference type="FunFam" id="1.10.10.10:FF:000196">
    <property type="entry name" value="UPF0502 protein YceH"/>
    <property type="match status" value="1"/>
</dbReference>
<dbReference type="Gene3D" id="1.10.10.10">
    <property type="entry name" value="Winged helix-like DNA-binding domain superfamily/Winged helix DNA-binding domain"/>
    <property type="match status" value="2"/>
</dbReference>
<dbReference type="HAMAP" id="MF_01584">
    <property type="entry name" value="UPF0502"/>
    <property type="match status" value="1"/>
</dbReference>
<dbReference type="InterPro" id="IPR007432">
    <property type="entry name" value="DUF480"/>
</dbReference>
<dbReference type="InterPro" id="IPR036388">
    <property type="entry name" value="WH-like_DNA-bd_sf"/>
</dbReference>
<dbReference type="InterPro" id="IPR036390">
    <property type="entry name" value="WH_DNA-bd_sf"/>
</dbReference>
<dbReference type="NCBIfam" id="NF008413">
    <property type="entry name" value="PRK11239.1"/>
    <property type="match status" value="1"/>
</dbReference>
<dbReference type="PANTHER" id="PTHR38768">
    <property type="entry name" value="UPF0502 PROTEIN YCEH"/>
    <property type="match status" value="1"/>
</dbReference>
<dbReference type="PANTHER" id="PTHR38768:SF1">
    <property type="entry name" value="UPF0502 PROTEIN YCEH"/>
    <property type="match status" value="1"/>
</dbReference>
<dbReference type="Pfam" id="PF04337">
    <property type="entry name" value="DUF480"/>
    <property type="match status" value="1"/>
</dbReference>
<dbReference type="SUPFAM" id="SSF46785">
    <property type="entry name" value="Winged helix' DNA-binding domain"/>
    <property type="match status" value="2"/>
</dbReference>
<sequence>MKYELTATEARVIGCLLEKQVTTPEQYPLSVNGVVTACNQKTNREPVMNLTEQEVQEQLDNLVKRHFLRTVSGFGNRVTKYEQRFCNSEFGDLKLSAAEVALVTTLLLRGAQTPGELRSRASRMHEFSDMTEVESTLERLASREDGPYVVRLAREPGKRESRYMHLFCGDVDELSLQTSAPESASGDLQSRVEALESEVAELKQRLDSLLAHLGE</sequence>
<reference key="1">
    <citation type="journal article" date="2011" name="J. Bacteriol.">
        <title>Comparative genomics of 28 Salmonella enterica isolates: evidence for CRISPR-mediated adaptive sublineage evolution.</title>
        <authorList>
            <person name="Fricke W.F."/>
            <person name="Mammel M.K."/>
            <person name="McDermott P.F."/>
            <person name="Tartera C."/>
            <person name="White D.G."/>
            <person name="Leclerc J.E."/>
            <person name="Ravel J."/>
            <person name="Cebula T.A."/>
        </authorList>
    </citation>
    <scope>NUCLEOTIDE SEQUENCE [LARGE SCALE GENOMIC DNA]</scope>
    <source>
        <strain>SL254</strain>
    </source>
</reference>
<feature type="chain" id="PRO_1000201254" description="UPF0502 protein YceH">
    <location>
        <begin position="1"/>
        <end position="215"/>
    </location>
</feature>
<protein>
    <recommendedName>
        <fullName evidence="1">UPF0502 protein YceH</fullName>
    </recommendedName>
</protein>
<gene>
    <name evidence="1" type="primary">yceH</name>
    <name type="ordered locus">SNSL254_A1265</name>
</gene>